<proteinExistence type="evidence at protein level"/>
<dbReference type="EC" id="3.1.3.16"/>
<dbReference type="EC" id="3.1.3.48"/>
<dbReference type="EMBL" id="AB183013">
    <property type="protein sequence ID" value="BAD26711.1"/>
    <property type="molecule type" value="mRNA"/>
</dbReference>
<dbReference type="EMBL" id="BC069187">
    <property type="protein sequence ID" value="AAH69187.1"/>
    <property type="molecule type" value="mRNA"/>
</dbReference>
<dbReference type="EMBL" id="AK004912">
    <property type="protein sequence ID" value="BAB23663.1"/>
    <property type="molecule type" value="mRNA"/>
</dbReference>
<dbReference type="CCDS" id="CCDS15518.1"/>
<dbReference type="RefSeq" id="NP_081001.1">
    <property type="nucleotide sequence ID" value="NM_026725.3"/>
</dbReference>
<dbReference type="SMR" id="Q6NT99"/>
<dbReference type="BioGRID" id="212855">
    <property type="interactions" value="3"/>
</dbReference>
<dbReference type="FunCoup" id="Q6NT99">
    <property type="interactions" value="296"/>
</dbReference>
<dbReference type="STRING" id="10090.ENSMUSP00000027826"/>
<dbReference type="PhosphoSitePlus" id="Q6NT99"/>
<dbReference type="jPOST" id="Q6NT99"/>
<dbReference type="PaxDb" id="10090-ENSMUSP00000027826"/>
<dbReference type="PeptideAtlas" id="Q6NT99"/>
<dbReference type="ProteomicsDB" id="277416"/>
<dbReference type="Pumba" id="Q6NT99"/>
<dbReference type="Antibodypedia" id="20475">
    <property type="antibodies" value="182 antibodies from 25 providers"/>
</dbReference>
<dbReference type="Ensembl" id="ENSMUST00000027826.7">
    <property type="protein sequence ID" value="ENSMUSP00000027826.6"/>
    <property type="gene ID" value="ENSMUSG00000026544.7"/>
</dbReference>
<dbReference type="GeneID" id="68440"/>
<dbReference type="KEGG" id="mmu:68440"/>
<dbReference type="UCSC" id="uc007dqw.1">
    <property type="organism name" value="mouse"/>
</dbReference>
<dbReference type="AGR" id="MGI:1915690"/>
<dbReference type="CTD" id="54935"/>
<dbReference type="MGI" id="MGI:1915690">
    <property type="gene designation" value="Dusp23"/>
</dbReference>
<dbReference type="VEuPathDB" id="HostDB:ENSMUSG00000026544"/>
<dbReference type="eggNOG" id="KOG1720">
    <property type="taxonomic scope" value="Eukaryota"/>
</dbReference>
<dbReference type="GeneTree" id="ENSGT00940000161329"/>
<dbReference type="HOGENOM" id="CLU_047330_4_2_1"/>
<dbReference type="InParanoid" id="Q6NT99"/>
<dbReference type="OMA" id="PAHYQYL"/>
<dbReference type="OrthoDB" id="432447at2759"/>
<dbReference type="PhylomeDB" id="Q6NT99"/>
<dbReference type="TreeFam" id="TF105125"/>
<dbReference type="BioGRID-ORCS" id="68440">
    <property type="hits" value="4 hits in 78 CRISPR screens"/>
</dbReference>
<dbReference type="ChiTaRS" id="Dusp23">
    <property type="organism name" value="mouse"/>
</dbReference>
<dbReference type="PRO" id="PR:Q6NT99"/>
<dbReference type="Proteomes" id="UP000000589">
    <property type="component" value="Chromosome 1"/>
</dbReference>
<dbReference type="RNAct" id="Q6NT99">
    <property type="molecule type" value="protein"/>
</dbReference>
<dbReference type="Bgee" id="ENSMUSG00000026544">
    <property type="expression patterns" value="Expressed in hindlimb stylopod muscle and 102 other cell types or tissues"/>
</dbReference>
<dbReference type="GO" id="GO:0005829">
    <property type="term" value="C:cytosol"/>
    <property type="evidence" value="ECO:0007669"/>
    <property type="project" value="UniProtKB-SubCell"/>
</dbReference>
<dbReference type="GO" id="GO:0005654">
    <property type="term" value="C:nucleoplasm"/>
    <property type="evidence" value="ECO:0007669"/>
    <property type="project" value="Ensembl"/>
</dbReference>
<dbReference type="GO" id="GO:0016791">
    <property type="term" value="F:phosphatase activity"/>
    <property type="evidence" value="ECO:0000250"/>
    <property type="project" value="UniProtKB"/>
</dbReference>
<dbReference type="GO" id="GO:0004722">
    <property type="term" value="F:protein serine/threonine phosphatase activity"/>
    <property type="evidence" value="ECO:0007669"/>
    <property type="project" value="UniProtKB-EC"/>
</dbReference>
<dbReference type="GO" id="GO:0004725">
    <property type="term" value="F:protein tyrosine phosphatase activity"/>
    <property type="evidence" value="ECO:0007669"/>
    <property type="project" value="UniProtKB-EC"/>
</dbReference>
<dbReference type="GO" id="GO:0008138">
    <property type="term" value="F:protein tyrosine/serine/threonine phosphatase activity"/>
    <property type="evidence" value="ECO:0007669"/>
    <property type="project" value="Ensembl"/>
</dbReference>
<dbReference type="GO" id="GO:0016311">
    <property type="term" value="P:dephosphorylation"/>
    <property type="evidence" value="ECO:0000250"/>
    <property type="project" value="UniProtKB"/>
</dbReference>
<dbReference type="CDD" id="cd14504">
    <property type="entry name" value="DUSP23"/>
    <property type="match status" value="1"/>
</dbReference>
<dbReference type="FunFam" id="3.90.190.10:FF:000063">
    <property type="entry name" value="Dual specificity phosphatase 23"/>
    <property type="match status" value="1"/>
</dbReference>
<dbReference type="Gene3D" id="3.90.190.10">
    <property type="entry name" value="Protein tyrosine phosphatase superfamily"/>
    <property type="match status" value="1"/>
</dbReference>
<dbReference type="InterPro" id="IPR029021">
    <property type="entry name" value="Prot-tyrosine_phosphatase-like"/>
</dbReference>
<dbReference type="InterPro" id="IPR050561">
    <property type="entry name" value="PTP"/>
</dbReference>
<dbReference type="InterPro" id="IPR057023">
    <property type="entry name" value="PTP-SAK"/>
</dbReference>
<dbReference type="InterPro" id="IPR016130">
    <property type="entry name" value="Tyr_Pase_AS"/>
</dbReference>
<dbReference type="InterPro" id="IPR003595">
    <property type="entry name" value="Tyr_Pase_cat"/>
</dbReference>
<dbReference type="InterPro" id="IPR000387">
    <property type="entry name" value="Tyr_Pase_dom"/>
</dbReference>
<dbReference type="InterPro" id="IPR020422">
    <property type="entry name" value="TYR_PHOSPHATASE_DUAL_dom"/>
</dbReference>
<dbReference type="PANTHER" id="PTHR23339">
    <property type="entry name" value="TYROSINE SPECIFIC PROTEIN PHOSPHATASE AND DUAL SPECIFICITY PROTEIN PHOSPHATASE"/>
    <property type="match status" value="1"/>
</dbReference>
<dbReference type="Pfam" id="PF22784">
    <property type="entry name" value="PTP-SAK"/>
    <property type="match status" value="1"/>
</dbReference>
<dbReference type="SMART" id="SM00195">
    <property type="entry name" value="DSPc"/>
    <property type="match status" value="1"/>
</dbReference>
<dbReference type="SMART" id="SM00404">
    <property type="entry name" value="PTPc_motif"/>
    <property type="match status" value="1"/>
</dbReference>
<dbReference type="SUPFAM" id="SSF52799">
    <property type="entry name" value="(Phosphotyrosine protein) phosphatases II"/>
    <property type="match status" value="1"/>
</dbReference>
<dbReference type="PROSITE" id="PS00383">
    <property type="entry name" value="TYR_PHOSPHATASE_1"/>
    <property type="match status" value="1"/>
</dbReference>
<dbReference type="PROSITE" id="PS50056">
    <property type="entry name" value="TYR_PHOSPHATASE_2"/>
    <property type="match status" value="1"/>
</dbReference>
<dbReference type="PROSITE" id="PS50054">
    <property type="entry name" value="TYR_PHOSPHATASE_DUAL"/>
    <property type="match status" value="1"/>
</dbReference>
<protein>
    <recommendedName>
        <fullName>Dual specificity protein phosphatase 23</fullName>
        <ecNumber>3.1.3.16</ecNumber>
        <ecNumber>3.1.3.48</ecNumber>
    </recommendedName>
    <alternativeName>
        <fullName>Low molecular mass dual specificity phosphatase 3</fullName>
        <shortName>LDP-3</shortName>
    </alternativeName>
</protein>
<sequence>MGVQPPNFSWVLPGRLAGLALPRLPAHYQFLLDQGVRHLVSLTERGPPHSDSCPGLTLHRMRIPDFCPPSPEQIDQFVKIVDEANARGEAVGVHCALGFGRTGTMLACYLVKERALAAGDAIAEIRRLRPGSIETYEQEKAVFQFYQRTK</sequence>
<keyword id="KW-0963">Cytoplasm</keyword>
<keyword id="KW-0378">Hydrolase</keyword>
<keyword id="KW-0539">Nucleus</keyword>
<keyword id="KW-0904">Protein phosphatase</keyword>
<keyword id="KW-1185">Reference proteome</keyword>
<accession>Q6NT99</accession>
<accession>Q9CW48</accession>
<name>DUS23_MOUSE</name>
<comment type="function">
    <text evidence="4">Protein phosphatase that mediates dephosphorylation of proteins phosphorylated on Tyr and Ser/Thr residues. In vitro, it can dephosphorylate p44-ERK1 (MAPK3) but not p54 SAPK-beta (MAPK10) in vitro. Able to enhance activation of JNK and p38 (MAPK14).</text>
</comment>
<comment type="catalytic activity">
    <reaction evidence="3 4">
        <text>O-phospho-L-tyrosyl-[protein] + H2O = L-tyrosyl-[protein] + phosphate</text>
        <dbReference type="Rhea" id="RHEA:10684"/>
        <dbReference type="Rhea" id="RHEA-COMP:10136"/>
        <dbReference type="Rhea" id="RHEA-COMP:20101"/>
        <dbReference type="ChEBI" id="CHEBI:15377"/>
        <dbReference type="ChEBI" id="CHEBI:43474"/>
        <dbReference type="ChEBI" id="CHEBI:46858"/>
        <dbReference type="ChEBI" id="CHEBI:61978"/>
        <dbReference type="EC" id="3.1.3.48"/>
    </reaction>
</comment>
<comment type="catalytic activity">
    <reaction evidence="4">
        <text>O-phospho-L-seryl-[protein] + H2O = L-seryl-[protein] + phosphate</text>
        <dbReference type="Rhea" id="RHEA:20629"/>
        <dbReference type="Rhea" id="RHEA-COMP:9863"/>
        <dbReference type="Rhea" id="RHEA-COMP:11604"/>
        <dbReference type="ChEBI" id="CHEBI:15377"/>
        <dbReference type="ChEBI" id="CHEBI:29999"/>
        <dbReference type="ChEBI" id="CHEBI:43474"/>
        <dbReference type="ChEBI" id="CHEBI:83421"/>
        <dbReference type="EC" id="3.1.3.16"/>
    </reaction>
</comment>
<comment type="catalytic activity">
    <reaction evidence="4">
        <text>O-phospho-L-threonyl-[protein] + H2O = L-threonyl-[protein] + phosphate</text>
        <dbReference type="Rhea" id="RHEA:47004"/>
        <dbReference type="Rhea" id="RHEA-COMP:11060"/>
        <dbReference type="Rhea" id="RHEA-COMP:11605"/>
        <dbReference type="ChEBI" id="CHEBI:15377"/>
        <dbReference type="ChEBI" id="CHEBI:30013"/>
        <dbReference type="ChEBI" id="CHEBI:43474"/>
        <dbReference type="ChEBI" id="CHEBI:61977"/>
        <dbReference type="EC" id="3.1.3.16"/>
    </reaction>
</comment>
<comment type="subcellular location">
    <subcellularLocation>
        <location evidence="1">Cytoplasm</location>
        <location evidence="1">Cytosol</location>
    </subcellularLocation>
    <subcellularLocation>
        <location evidence="1">Nucleus</location>
    </subcellularLocation>
    <text evidence="1">Mainly cytosolic. Weakly nuclear (By similarity).</text>
</comment>
<comment type="tissue specificity">
    <text evidence="4">Widely expressed.</text>
</comment>
<comment type="similarity">
    <text evidence="5">Belongs to the protein-tyrosine phosphatase family. Non-receptor class dual specificity subfamily.</text>
</comment>
<feature type="chain" id="PRO_0000094836" description="Dual specificity protein phosphatase 23">
    <location>
        <begin position="1"/>
        <end position="150"/>
    </location>
</feature>
<feature type="domain" description="Tyrosine-protein phosphatase" evidence="2">
    <location>
        <begin position="7"/>
        <end position="150"/>
    </location>
</feature>
<feature type="active site" description="Phosphocysteine intermediate" evidence="2">
    <location>
        <position position="95"/>
    </location>
</feature>
<feature type="sequence conflict" description="In Ref. 3; BAB23663." evidence="5" ref="3">
    <original>P</original>
    <variation>L</variation>
    <location>
        <position position="13"/>
    </location>
</feature>
<organism>
    <name type="scientific">Mus musculus</name>
    <name type="common">Mouse</name>
    <dbReference type="NCBI Taxonomy" id="10090"/>
    <lineage>
        <taxon>Eukaryota</taxon>
        <taxon>Metazoa</taxon>
        <taxon>Chordata</taxon>
        <taxon>Craniata</taxon>
        <taxon>Vertebrata</taxon>
        <taxon>Euteleostomi</taxon>
        <taxon>Mammalia</taxon>
        <taxon>Eutheria</taxon>
        <taxon>Euarchontoglires</taxon>
        <taxon>Glires</taxon>
        <taxon>Rodentia</taxon>
        <taxon>Myomorpha</taxon>
        <taxon>Muroidea</taxon>
        <taxon>Muridae</taxon>
        <taxon>Murinae</taxon>
        <taxon>Mus</taxon>
        <taxon>Mus</taxon>
    </lineage>
</organism>
<evidence type="ECO:0000250" key="1"/>
<evidence type="ECO:0000255" key="2">
    <source>
        <dbReference type="PROSITE-ProRule" id="PRU00160"/>
    </source>
</evidence>
<evidence type="ECO:0000255" key="3">
    <source>
        <dbReference type="PROSITE-ProRule" id="PRU10044"/>
    </source>
</evidence>
<evidence type="ECO:0000269" key="4">
    <source>
    </source>
</evidence>
<evidence type="ECO:0000305" key="5"/>
<gene>
    <name type="primary">Dusp23</name>
    <name type="synonym">Ldp3</name>
</gene>
<reference key="1">
    <citation type="journal article" date="2004" name="Biochem. J.">
        <title>Characterization of a novel low-molecular-mass dual-specificity phosphatase-3 (LDP-3) that enhances activation of JNK and p38.</title>
        <authorList>
            <person name="Takagaki K."/>
            <person name="Satoh T."/>
            <person name="Tanuma N."/>
            <person name="Masuda K."/>
            <person name="Takekawa M."/>
            <person name="Shima H."/>
            <person name="Kikuchi K."/>
        </authorList>
    </citation>
    <scope>NUCLEOTIDE SEQUENCE [MRNA]</scope>
    <scope>ENZYME ACTIVITY</scope>
    <scope>FUNCTION</scope>
    <scope>SUBCELLULAR LOCATION</scope>
    <scope>TISSUE SPECIFICITY</scope>
</reference>
<reference key="2">
    <citation type="journal article" date="2004" name="Genome Res.">
        <title>The status, quality, and expansion of the NIH full-length cDNA project: the Mammalian Gene Collection (MGC).</title>
        <authorList>
            <consortium name="The MGC Project Team"/>
        </authorList>
    </citation>
    <scope>NUCLEOTIDE SEQUENCE [LARGE SCALE MRNA]</scope>
    <source>
        <strain>C57BL/6J</strain>
        <tissue>Mammary gland</tissue>
    </source>
</reference>
<reference key="3">
    <citation type="journal article" date="2005" name="Science">
        <title>The transcriptional landscape of the mammalian genome.</title>
        <authorList>
            <person name="Carninci P."/>
            <person name="Kasukawa T."/>
            <person name="Katayama S."/>
            <person name="Gough J."/>
            <person name="Frith M.C."/>
            <person name="Maeda N."/>
            <person name="Oyama R."/>
            <person name="Ravasi T."/>
            <person name="Lenhard B."/>
            <person name="Wells C."/>
            <person name="Kodzius R."/>
            <person name="Shimokawa K."/>
            <person name="Bajic V.B."/>
            <person name="Brenner S.E."/>
            <person name="Batalov S."/>
            <person name="Forrest A.R."/>
            <person name="Zavolan M."/>
            <person name="Davis M.J."/>
            <person name="Wilming L.G."/>
            <person name="Aidinis V."/>
            <person name="Allen J.E."/>
            <person name="Ambesi-Impiombato A."/>
            <person name="Apweiler R."/>
            <person name="Aturaliya R.N."/>
            <person name="Bailey T.L."/>
            <person name="Bansal M."/>
            <person name="Baxter L."/>
            <person name="Beisel K.W."/>
            <person name="Bersano T."/>
            <person name="Bono H."/>
            <person name="Chalk A.M."/>
            <person name="Chiu K.P."/>
            <person name="Choudhary V."/>
            <person name="Christoffels A."/>
            <person name="Clutterbuck D.R."/>
            <person name="Crowe M.L."/>
            <person name="Dalla E."/>
            <person name="Dalrymple B.P."/>
            <person name="de Bono B."/>
            <person name="Della Gatta G."/>
            <person name="di Bernardo D."/>
            <person name="Down T."/>
            <person name="Engstrom P."/>
            <person name="Fagiolini M."/>
            <person name="Faulkner G."/>
            <person name="Fletcher C.F."/>
            <person name="Fukushima T."/>
            <person name="Furuno M."/>
            <person name="Futaki S."/>
            <person name="Gariboldi M."/>
            <person name="Georgii-Hemming P."/>
            <person name="Gingeras T.R."/>
            <person name="Gojobori T."/>
            <person name="Green R.E."/>
            <person name="Gustincich S."/>
            <person name="Harbers M."/>
            <person name="Hayashi Y."/>
            <person name="Hensch T.K."/>
            <person name="Hirokawa N."/>
            <person name="Hill D."/>
            <person name="Huminiecki L."/>
            <person name="Iacono M."/>
            <person name="Ikeo K."/>
            <person name="Iwama A."/>
            <person name="Ishikawa T."/>
            <person name="Jakt M."/>
            <person name="Kanapin A."/>
            <person name="Katoh M."/>
            <person name="Kawasawa Y."/>
            <person name="Kelso J."/>
            <person name="Kitamura H."/>
            <person name="Kitano H."/>
            <person name="Kollias G."/>
            <person name="Krishnan S.P."/>
            <person name="Kruger A."/>
            <person name="Kummerfeld S.K."/>
            <person name="Kurochkin I.V."/>
            <person name="Lareau L.F."/>
            <person name="Lazarevic D."/>
            <person name="Lipovich L."/>
            <person name="Liu J."/>
            <person name="Liuni S."/>
            <person name="McWilliam S."/>
            <person name="Madan Babu M."/>
            <person name="Madera M."/>
            <person name="Marchionni L."/>
            <person name="Matsuda H."/>
            <person name="Matsuzawa S."/>
            <person name="Miki H."/>
            <person name="Mignone F."/>
            <person name="Miyake S."/>
            <person name="Morris K."/>
            <person name="Mottagui-Tabar S."/>
            <person name="Mulder N."/>
            <person name="Nakano N."/>
            <person name="Nakauchi H."/>
            <person name="Ng P."/>
            <person name="Nilsson R."/>
            <person name="Nishiguchi S."/>
            <person name="Nishikawa S."/>
            <person name="Nori F."/>
            <person name="Ohara O."/>
            <person name="Okazaki Y."/>
            <person name="Orlando V."/>
            <person name="Pang K.C."/>
            <person name="Pavan W.J."/>
            <person name="Pavesi G."/>
            <person name="Pesole G."/>
            <person name="Petrovsky N."/>
            <person name="Piazza S."/>
            <person name="Reed J."/>
            <person name="Reid J.F."/>
            <person name="Ring B.Z."/>
            <person name="Ringwald M."/>
            <person name="Rost B."/>
            <person name="Ruan Y."/>
            <person name="Salzberg S.L."/>
            <person name="Sandelin A."/>
            <person name="Schneider C."/>
            <person name="Schoenbach C."/>
            <person name="Sekiguchi K."/>
            <person name="Semple C.A."/>
            <person name="Seno S."/>
            <person name="Sessa L."/>
            <person name="Sheng Y."/>
            <person name="Shibata Y."/>
            <person name="Shimada H."/>
            <person name="Shimada K."/>
            <person name="Silva D."/>
            <person name="Sinclair B."/>
            <person name="Sperling S."/>
            <person name="Stupka E."/>
            <person name="Sugiura K."/>
            <person name="Sultana R."/>
            <person name="Takenaka Y."/>
            <person name="Taki K."/>
            <person name="Tammoja K."/>
            <person name="Tan S.L."/>
            <person name="Tang S."/>
            <person name="Taylor M.S."/>
            <person name="Tegner J."/>
            <person name="Teichmann S.A."/>
            <person name="Ueda H.R."/>
            <person name="van Nimwegen E."/>
            <person name="Verardo R."/>
            <person name="Wei C.L."/>
            <person name="Yagi K."/>
            <person name="Yamanishi H."/>
            <person name="Zabarovsky E."/>
            <person name="Zhu S."/>
            <person name="Zimmer A."/>
            <person name="Hide W."/>
            <person name="Bult C."/>
            <person name="Grimmond S.M."/>
            <person name="Teasdale R.D."/>
            <person name="Liu E.T."/>
            <person name="Brusic V."/>
            <person name="Quackenbush J."/>
            <person name="Wahlestedt C."/>
            <person name="Mattick J.S."/>
            <person name="Hume D.A."/>
            <person name="Kai C."/>
            <person name="Sasaki D."/>
            <person name="Tomaru Y."/>
            <person name="Fukuda S."/>
            <person name="Kanamori-Katayama M."/>
            <person name="Suzuki M."/>
            <person name="Aoki J."/>
            <person name="Arakawa T."/>
            <person name="Iida J."/>
            <person name="Imamura K."/>
            <person name="Itoh M."/>
            <person name="Kato T."/>
            <person name="Kawaji H."/>
            <person name="Kawagashira N."/>
            <person name="Kawashima T."/>
            <person name="Kojima M."/>
            <person name="Kondo S."/>
            <person name="Konno H."/>
            <person name="Nakano K."/>
            <person name="Ninomiya N."/>
            <person name="Nishio T."/>
            <person name="Okada M."/>
            <person name="Plessy C."/>
            <person name="Shibata K."/>
            <person name="Shiraki T."/>
            <person name="Suzuki S."/>
            <person name="Tagami M."/>
            <person name="Waki K."/>
            <person name="Watahiki A."/>
            <person name="Okamura-Oho Y."/>
            <person name="Suzuki H."/>
            <person name="Kawai J."/>
            <person name="Hayashizaki Y."/>
        </authorList>
    </citation>
    <scope>NUCLEOTIDE SEQUENCE [LARGE SCALE MRNA]</scope>
    <source>
        <strain>C57BL/6J</strain>
        <tissue>Liver</tissue>
    </source>
</reference>
<reference key="4">
    <citation type="journal article" date="2010" name="Cell">
        <title>A tissue-specific atlas of mouse protein phosphorylation and expression.</title>
        <authorList>
            <person name="Huttlin E.L."/>
            <person name="Jedrychowski M.P."/>
            <person name="Elias J.E."/>
            <person name="Goswami T."/>
            <person name="Rad R."/>
            <person name="Beausoleil S.A."/>
            <person name="Villen J."/>
            <person name="Haas W."/>
            <person name="Sowa M.E."/>
            <person name="Gygi S.P."/>
        </authorList>
    </citation>
    <scope>IDENTIFICATION BY MASS SPECTROMETRY [LARGE SCALE ANALYSIS]</scope>
    <source>
        <tissue>Brain</tissue>
        <tissue>Brown adipose tissue</tissue>
        <tissue>Kidney</tissue>
        <tissue>Liver</tissue>
        <tissue>Lung</tissue>
        <tissue>Pancreas</tissue>
    </source>
</reference>